<organism>
    <name type="scientific">Arabidopsis thaliana</name>
    <name type="common">Mouse-ear cress</name>
    <dbReference type="NCBI Taxonomy" id="3702"/>
    <lineage>
        <taxon>Eukaryota</taxon>
        <taxon>Viridiplantae</taxon>
        <taxon>Streptophyta</taxon>
        <taxon>Embryophyta</taxon>
        <taxon>Tracheophyta</taxon>
        <taxon>Spermatophyta</taxon>
        <taxon>Magnoliopsida</taxon>
        <taxon>eudicotyledons</taxon>
        <taxon>Gunneridae</taxon>
        <taxon>Pentapetalae</taxon>
        <taxon>rosids</taxon>
        <taxon>malvids</taxon>
        <taxon>Brassicales</taxon>
        <taxon>Brassicaceae</taxon>
        <taxon>Camelineae</taxon>
        <taxon>Arabidopsis</taxon>
    </lineage>
</organism>
<dbReference type="EMBL" id="AB038491">
    <property type="protein sequence ID" value="BAB32669.1"/>
    <property type="molecule type" value="mRNA"/>
</dbReference>
<dbReference type="EMBL" id="AL021768">
    <property type="protein sequence ID" value="CAA16940.1"/>
    <property type="molecule type" value="Genomic_DNA"/>
</dbReference>
<dbReference type="EMBL" id="AL161551">
    <property type="protein sequence ID" value="CAB78966.1"/>
    <property type="molecule type" value="Genomic_DNA"/>
</dbReference>
<dbReference type="EMBL" id="CP002687">
    <property type="protein sequence ID" value="AEE84207.1"/>
    <property type="molecule type" value="Genomic_DNA"/>
</dbReference>
<dbReference type="EMBL" id="AF370309">
    <property type="protein sequence ID" value="AAK44124.1"/>
    <property type="molecule type" value="mRNA"/>
</dbReference>
<dbReference type="EMBL" id="AY052670">
    <property type="protein sequence ID" value="AAK96574.1"/>
    <property type="molecule type" value="mRNA"/>
</dbReference>
<dbReference type="EMBL" id="AY063095">
    <property type="protein sequence ID" value="AAL34269.1"/>
    <property type="molecule type" value="mRNA"/>
</dbReference>
<dbReference type="PIR" id="T06157">
    <property type="entry name" value="T06157"/>
</dbReference>
<dbReference type="RefSeq" id="NP_193699.1">
    <property type="nucleotide sequence ID" value="NM_118084.5"/>
</dbReference>
<dbReference type="PDB" id="2EFC">
    <property type="method" value="X-ray"/>
    <property type="resolution" value="2.09 A"/>
    <property type="chains" value="B/D=1-179"/>
</dbReference>
<dbReference type="PDB" id="2EFD">
    <property type="method" value="X-ray"/>
    <property type="resolution" value="3.00 A"/>
    <property type="chains" value="B/D=1-179"/>
</dbReference>
<dbReference type="PDB" id="2EFE">
    <property type="method" value="X-ray"/>
    <property type="resolution" value="2.08 A"/>
    <property type="chains" value="B/D=1-179"/>
</dbReference>
<dbReference type="PDB" id="2EFH">
    <property type="method" value="X-ray"/>
    <property type="resolution" value="2.10 A"/>
    <property type="chains" value="B/D=1-179"/>
</dbReference>
<dbReference type="PDB" id="4G01">
    <property type="method" value="X-ray"/>
    <property type="resolution" value="2.20 A"/>
    <property type="chains" value="B=1-179"/>
</dbReference>
<dbReference type="PDBsum" id="2EFC"/>
<dbReference type="PDBsum" id="2EFD"/>
<dbReference type="PDBsum" id="2EFE"/>
<dbReference type="PDBsum" id="2EFH"/>
<dbReference type="PDBsum" id="4G01"/>
<dbReference type="SMR" id="Q9SN68"/>
<dbReference type="BioGRID" id="12999">
    <property type="interactions" value="1"/>
</dbReference>
<dbReference type="FunCoup" id="Q9SN68">
    <property type="interactions" value="4626"/>
</dbReference>
<dbReference type="IntAct" id="Q9SN68">
    <property type="interactions" value="2"/>
</dbReference>
<dbReference type="STRING" id="3702.Q9SN68"/>
<dbReference type="iPTMnet" id="Q9SN68"/>
<dbReference type="PaxDb" id="3702-AT4G19640.1"/>
<dbReference type="ProteomicsDB" id="225957"/>
<dbReference type="EnsemblPlants" id="AT4G19640.1">
    <property type="protein sequence ID" value="AT4G19640.1"/>
    <property type="gene ID" value="AT4G19640"/>
</dbReference>
<dbReference type="GeneID" id="827706"/>
<dbReference type="Gramene" id="AT4G19640.1">
    <property type="protein sequence ID" value="AT4G19640.1"/>
    <property type="gene ID" value="AT4G19640"/>
</dbReference>
<dbReference type="KEGG" id="ath:AT4G19640"/>
<dbReference type="Araport" id="AT4G19640"/>
<dbReference type="TAIR" id="AT4G19640">
    <property type="gene designation" value="ARA7"/>
</dbReference>
<dbReference type="eggNOG" id="KOG0092">
    <property type="taxonomic scope" value="Eukaryota"/>
</dbReference>
<dbReference type="HOGENOM" id="CLU_041217_10_2_1"/>
<dbReference type="InParanoid" id="Q9SN68"/>
<dbReference type="OMA" id="FTKAQDW"/>
<dbReference type="OrthoDB" id="63533at2759"/>
<dbReference type="PhylomeDB" id="Q9SN68"/>
<dbReference type="EvolutionaryTrace" id="Q9SN68"/>
<dbReference type="PRO" id="PR:Q9SN68"/>
<dbReference type="Proteomes" id="UP000006548">
    <property type="component" value="Chromosome 4"/>
</dbReference>
<dbReference type="ExpressionAtlas" id="Q9SN68">
    <property type="expression patterns" value="baseline and differential"/>
</dbReference>
<dbReference type="GO" id="GO:0005737">
    <property type="term" value="C:cytoplasm"/>
    <property type="evidence" value="ECO:0000314"/>
    <property type="project" value="UniProtKB"/>
</dbReference>
<dbReference type="GO" id="GO:0005769">
    <property type="term" value="C:early endosome"/>
    <property type="evidence" value="ECO:0000314"/>
    <property type="project" value="UniProtKB"/>
</dbReference>
<dbReference type="GO" id="GO:0031901">
    <property type="term" value="C:early endosome membrane"/>
    <property type="evidence" value="ECO:0007669"/>
    <property type="project" value="UniProtKB-SubCell"/>
</dbReference>
<dbReference type="GO" id="GO:0005783">
    <property type="term" value="C:endoplasmic reticulum"/>
    <property type="evidence" value="ECO:0007005"/>
    <property type="project" value="TAIR"/>
</dbReference>
<dbReference type="GO" id="GO:0005768">
    <property type="term" value="C:endosome"/>
    <property type="evidence" value="ECO:0000314"/>
    <property type="project" value="TAIR"/>
</dbReference>
<dbReference type="GO" id="GO:0043229">
    <property type="term" value="C:intracellular organelle"/>
    <property type="evidence" value="ECO:0000314"/>
    <property type="project" value="TAIR"/>
</dbReference>
<dbReference type="GO" id="GO:0032585">
    <property type="term" value="C:multivesicular body membrane"/>
    <property type="evidence" value="ECO:0007669"/>
    <property type="project" value="UniProtKB-SubCell"/>
</dbReference>
<dbReference type="GO" id="GO:0005886">
    <property type="term" value="C:plasma membrane"/>
    <property type="evidence" value="ECO:0007005"/>
    <property type="project" value="TAIR"/>
</dbReference>
<dbReference type="GO" id="GO:0005525">
    <property type="term" value="F:GTP binding"/>
    <property type="evidence" value="ECO:0000314"/>
    <property type="project" value="UniProtKB"/>
</dbReference>
<dbReference type="GO" id="GO:0003924">
    <property type="term" value="F:GTPase activity"/>
    <property type="evidence" value="ECO:0007669"/>
    <property type="project" value="InterPro"/>
</dbReference>
<dbReference type="GO" id="GO:0140313">
    <property type="term" value="F:molecular sequestering activity"/>
    <property type="evidence" value="ECO:0000269"/>
    <property type="project" value="DisProt"/>
</dbReference>
<dbReference type="GO" id="GO:0036094">
    <property type="term" value="F:small molecule binding"/>
    <property type="evidence" value="ECO:0000269"/>
    <property type="project" value="DisProt"/>
</dbReference>
<dbReference type="GO" id="GO:0006886">
    <property type="term" value="P:intracellular protein transport"/>
    <property type="evidence" value="ECO:0000315"/>
    <property type="project" value="UniProtKB"/>
</dbReference>
<dbReference type="GO" id="GO:0045324">
    <property type="term" value="P:late endosome to vacuole transport"/>
    <property type="evidence" value="ECO:0000315"/>
    <property type="project" value="UniProtKB"/>
</dbReference>
<dbReference type="GO" id="GO:0007033">
    <property type="term" value="P:vacuole organization"/>
    <property type="evidence" value="ECO:0000315"/>
    <property type="project" value="UniProtKB"/>
</dbReference>
<dbReference type="CDD" id="cd01860">
    <property type="entry name" value="Rab5_related"/>
    <property type="match status" value="1"/>
</dbReference>
<dbReference type="DisProt" id="DP02962"/>
<dbReference type="FunFam" id="3.40.50.300:FF:000687">
    <property type="entry name" value="Ras-related protein RABF2b"/>
    <property type="match status" value="1"/>
</dbReference>
<dbReference type="Gene3D" id="3.40.50.300">
    <property type="entry name" value="P-loop containing nucleotide triphosphate hydrolases"/>
    <property type="match status" value="1"/>
</dbReference>
<dbReference type="InterPro" id="IPR027417">
    <property type="entry name" value="P-loop_NTPase"/>
</dbReference>
<dbReference type="InterPro" id="IPR005225">
    <property type="entry name" value="Small_GTP-bd"/>
</dbReference>
<dbReference type="InterPro" id="IPR001806">
    <property type="entry name" value="Small_GTPase"/>
</dbReference>
<dbReference type="NCBIfam" id="TIGR00231">
    <property type="entry name" value="small_GTP"/>
    <property type="match status" value="1"/>
</dbReference>
<dbReference type="PANTHER" id="PTHR47978">
    <property type="match status" value="1"/>
</dbReference>
<dbReference type="Pfam" id="PF00071">
    <property type="entry name" value="Ras"/>
    <property type="match status" value="1"/>
</dbReference>
<dbReference type="PRINTS" id="PR00449">
    <property type="entry name" value="RASTRNSFRMNG"/>
</dbReference>
<dbReference type="SMART" id="SM00175">
    <property type="entry name" value="RAB"/>
    <property type="match status" value="1"/>
</dbReference>
<dbReference type="SMART" id="SM00176">
    <property type="entry name" value="RAN"/>
    <property type="match status" value="1"/>
</dbReference>
<dbReference type="SMART" id="SM00173">
    <property type="entry name" value="RAS"/>
    <property type="match status" value="1"/>
</dbReference>
<dbReference type="SMART" id="SM00174">
    <property type="entry name" value="RHO"/>
    <property type="match status" value="1"/>
</dbReference>
<dbReference type="SUPFAM" id="SSF52540">
    <property type="entry name" value="P-loop containing nucleoside triphosphate hydrolases"/>
    <property type="match status" value="1"/>
</dbReference>
<dbReference type="PROSITE" id="PS51419">
    <property type="entry name" value="RAB"/>
    <property type="match status" value="1"/>
</dbReference>
<gene>
    <name evidence="16" type="primary">RABF2B</name>
    <name evidence="15" type="synonym">ARA-7</name>
    <name evidence="18" type="synonym">RAB5B</name>
    <name evidence="21" type="ordered locus">At4g19640</name>
    <name evidence="22" type="ORF">F24J7.190</name>
</gene>
<reference key="1">
    <citation type="journal article" date="2001" name="EMBO J.">
        <title>Ara6, a plant-unique novel type Rab GTPase, functions in the endocytic pathway of Arabidopsis thaliana.</title>
        <authorList>
            <person name="Ueda T."/>
            <person name="Yamaguchi M."/>
            <person name="Uchimiya H."/>
            <person name="Nakano A."/>
        </authorList>
    </citation>
    <scope>NUCLEOTIDE SEQUENCE [MRNA]</scope>
    <scope>SUBCELLULAR LOCATION</scope>
    <scope>TISSUE SPECIFICITY</scope>
    <scope>MUTAGENESIS OF GLN-69</scope>
</reference>
<reference key="2">
    <citation type="journal article" date="1999" name="Nature">
        <title>Sequence and analysis of chromosome 4 of the plant Arabidopsis thaliana.</title>
        <authorList>
            <person name="Mayer K.F.X."/>
            <person name="Schueller C."/>
            <person name="Wambutt R."/>
            <person name="Murphy G."/>
            <person name="Volckaert G."/>
            <person name="Pohl T."/>
            <person name="Duesterhoeft A."/>
            <person name="Stiekema W."/>
            <person name="Entian K.-D."/>
            <person name="Terryn N."/>
            <person name="Harris B."/>
            <person name="Ansorge W."/>
            <person name="Brandt P."/>
            <person name="Grivell L.A."/>
            <person name="Rieger M."/>
            <person name="Weichselgartner M."/>
            <person name="de Simone V."/>
            <person name="Obermaier B."/>
            <person name="Mache R."/>
            <person name="Mueller M."/>
            <person name="Kreis M."/>
            <person name="Delseny M."/>
            <person name="Puigdomenech P."/>
            <person name="Watson M."/>
            <person name="Schmidtheini T."/>
            <person name="Reichert B."/>
            <person name="Portetelle D."/>
            <person name="Perez-Alonso M."/>
            <person name="Boutry M."/>
            <person name="Bancroft I."/>
            <person name="Vos P."/>
            <person name="Hoheisel J."/>
            <person name="Zimmermann W."/>
            <person name="Wedler H."/>
            <person name="Ridley P."/>
            <person name="Langham S.-A."/>
            <person name="McCullagh B."/>
            <person name="Bilham L."/>
            <person name="Robben J."/>
            <person name="van der Schueren J."/>
            <person name="Grymonprez B."/>
            <person name="Chuang Y.-J."/>
            <person name="Vandenbussche F."/>
            <person name="Braeken M."/>
            <person name="Weltjens I."/>
            <person name="Voet M."/>
            <person name="Bastiaens I."/>
            <person name="Aert R."/>
            <person name="Defoor E."/>
            <person name="Weitzenegger T."/>
            <person name="Bothe G."/>
            <person name="Ramsperger U."/>
            <person name="Hilbert H."/>
            <person name="Braun M."/>
            <person name="Holzer E."/>
            <person name="Brandt A."/>
            <person name="Peters S."/>
            <person name="van Staveren M."/>
            <person name="Dirkse W."/>
            <person name="Mooijman P."/>
            <person name="Klein Lankhorst R."/>
            <person name="Rose M."/>
            <person name="Hauf J."/>
            <person name="Koetter P."/>
            <person name="Berneiser S."/>
            <person name="Hempel S."/>
            <person name="Feldpausch M."/>
            <person name="Lamberth S."/>
            <person name="Van den Daele H."/>
            <person name="De Keyser A."/>
            <person name="Buysshaert C."/>
            <person name="Gielen J."/>
            <person name="Villarroel R."/>
            <person name="De Clercq R."/>
            <person name="van Montagu M."/>
            <person name="Rogers J."/>
            <person name="Cronin A."/>
            <person name="Quail M.A."/>
            <person name="Bray-Allen S."/>
            <person name="Clark L."/>
            <person name="Doggett J."/>
            <person name="Hall S."/>
            <person name="Kay M."/>
            <person name="Lennard N."/>
            <person name="McLay K."/>
            <person name="Mayes R."/>
            <person name="Pettett A."/>
            <person name="Rajandream M.A."/>
            <person name="Lyne M."/>
            <person name="Benes V."/>
            <person name="Rechmann S."/>
            <person name="Borkova D."/>
            <person name="Bloecker H."/>
            <person name="Scharfe M."/>
            <person name="Grimm M."/>
            <person name="Loehnert T.-H."/>
            <person name="Dose S."/>
            <person name="de Haan M."/>
            <person name="Maarse A.C."/>
            <person name="Schaefer M."/>
            <person name="Mueller-Auer S."/>
            <person name="Gabel C."/>
            <person name="Fuchs M."/>
            <person name="Fartmann B."/>
            <person name="Granderath K."/>
            <person name="Dauner D."/>
            <person name="Herzl A."/>
            <person name="Neumann S."/>
            <person name="Argiriou A."/>
            <person name="Vitale D."/>
            <person name="Liguori R."/>
            <person name="Piravandi E."/>
            <person name="Massenet O."/>
            <person name="Quigley F."/>
            <person name="Clabauld G."/>
            <person name="Muendlein A."/>
            <person name="Felber R."/>
            <person name="Schnabl S."/>
            <person name="Hiller R."/>
            <person name="Schmidt W."/>
            <person name="Lecharny A."/>
            <person name="Aubourg S."/>
            <person name="Chefdor F."/>
            <person name="Cooke R."/>
            <person name="Berger C."/>
            <person name="Monfort A."/>
            <person name="Casacuberta E."/>
            <person name="Gibbons T."/>
            <person name="Weber N."/>
            <person name="Vandenbol M."/>
            <person name="Bargues M."/>
            <person name="Terol J."/>
            <person name="Torres A."/>
            <person name="Perez-Perez A."/>
            <person name="Purnelle B."/>
            <person name="Bent E."/>
            <person name="Johnson S."/>
            <person name="Tacon D."/>
            <person name="Jesse T."/>
            <person name="Heijnen L."/>
            <person name="Schwarz S."/>
            <person name="Scholler P."/>
            <person name="Heber S."/>
            <person name="Francs P."/>
            <person name="Bielke C."/>
            <person name="Frishman D."/>
            <person name="Haase D."/>
            <person name="Lemcke K."/>
            <person name="Mewes H.-W."/>
            <person name="Stocker S."/>
            <person name="Zaccaria P."/>
            <person name="Bevan M."/>
            <person name="Wilson R.K."/>
            <person name="de la Bastide M."/>
            <person name="Habermann K."/>
            <person name="Parnell L."/>
            <person name="Dedhia N."/>
            <person name="Gnoj L."/>
            <person name="Schutz K."/>
            <person name="Huang E."/>
            <person name="Spiegel L."/>
            <person name="Sekhon M."/>
            <person name="Murray J."/>
            <person name="Sheet P."/>
            <person name="Cordes M."/>
            <person name="Abu-Threideh J."/>
            <person name="Stoneking T."/>
            <person name="Kalicki J."/>
            <person name="Graves T."/>
            <person name="Harmon G."/>
            <person name="Edwards J."/>
            <person name="Latreille P."/>
            <person name="Courtney L."/>
            <person name="Cloud J."/>
            <person name="Abbott A."/>
            <person name="Scott K."/>
            <person name="Johnson D."/>
            <person name="Minx P."/>
            <person name="Bentley D."/>
            <person name="Fulton B."/>
            <person name="Miller N."/>
            <person name="Greco T."/>
            <person name="Kemp K."/>
            <person name="Kramer J."/>
            <person name="Fulton L."/>
            <person name="Mardis E."/>
            <person name="Dante M."/>
            <person name="Pepin K."/>
            <person name="Hillier L.W."/>
            <person name="Nelson J."/>
            <person name="Spieth J."/>
            <person name="Ryan E."/>
            <person name="Andrews S."/>
            <person name="Geisel C."/>
            <person name="Layman D."/>
            <person name="Du H."/>
            <person name="Ali J."/>
            <person name="Berghoff A."/>
            <person name="Jones K."/>
            <person name="Drone K."/>
            <person name="Cotton M."/>
            <person name="Joshu C."/>
            <person name="Antonoiu B."/>
            <person name="Zidanic M."/>
            <person name="Strong C."/>
            <person name="Sun H."/>
            <person name="Lamar B."/>
            <person name="Yordan C."/>
            <person name="Ma P."/>
            <person name="Zhong J."/>
            <person name="Preston R."/>
            <person name="Vil D."/>
            <person name="Shekher M."/>
            <person name="Matero A."/>
            <person name="Shah R."/>
            <person name="Swaby I.K."/>
            <person name="O'Shaughnessy A."/>
            <person name="Rodriguez M."/>
            <person name="Hoffman J."/>
            <person name="Till S."/>
            <person name="Granat S."/>
            <person name="Shohdy N."/>
            <person name="Hasegawa A."/>
            <person name="Hameed A."/>
            <person name="Lodhi M."/>
            <person name="Johnson A."/>
            <person name="Chen E."/>
            <person name="Marra M.A."/>
            <person name="Martienssen R."/>
            <person name="McCombie W.R."/>
        </authorList>
    </citation>
    <scope>NUCLEOTIDE SEQUENCE [LARGE SCALE GENOMIC DNA]</scope>
    <source>
        <strain>cv. Columbia</strain>
    </source>
</reference>
<reference key="3">
    <citation type="journal article" date="2017" name="Plant J.">
        <title>Araport11: a complete reannotation of the Arabidopsis thaliana reference genome.</title>
        <authorList>
            <person name="Cheng C.Y."/>
            <person name="Krishnakumar V."/>
            <person name="Chan A.P."/>
            <person name="Thibaud-Nissen F."/>
            <person name="Schobel S."/>
            <person name="Town C.D."/>
        </authorList>
    </citation>
    <scope>GENOME REANNOTATION</scope>
    <source>
        <strain>cv. Columbia</strain>
    </source>
</reference>
<reference key="4">
    <citation type="journal article" date="2003" name="Science">
        <title>Empirical analysis of transcriptional activity in the Arabidopsis genome.</title>
        <authorList>
            <person name="Yamada K."/>
            <person name="Lim J."/>
            <person name="Dale J.M."/>
            <person name="Chen H."/>
            <person name="Shinn P."/>
            <person name="Palm C.J."/>
            <person name="Southwick A.M."/>
            <person name="Wu H.C."/>
            <person name="Kim C.J."/>
            <person name="Nguyen M."/>
            <person name="Pham P.K."/>
            <person name="Cheuk R.F."/>
            <person name="Karlin-Newmann G."/>
            <person name="Liu S.X."/>
            <person name="Lam B."/>
            <person name="Sakano H."/>
            <person name="Wu T."/>
            <person name="Yu G."/>
            <person name="Miranda M."/>
            <person name="Quach H.L."/>
            <person name="Tripp M."/>
            <person name="Chang C.H."/>
            <person name="Lee J.M."/>
            <person name="Toriumi M.J."/>
            <person name="Chan M.M."/>
            <person name="Tang C.C."/>
            <person name="Onodera C.S."/>
            <person name="Deng J.M."/>
            <person name="Akiyama K."/>
            <person name="Ansari Y."/>
            <person name="Arakawa T."/>
            <person name="Banh J."/>
            <person name="Banno F."/>
            <person name="Bowser L."/>
            <person name="Brooks S.Y."/>
            <person name="Carninci P."/>
            <person name="Chao Q."/>
            <person name="Choy N."/>
            <person name="Enju A."/>
            <person name="Goldsmith A.D."/>
            <person name="Gurjal M."/>
            <person name="Hansen N.F."/>
            <person name="Hayashizaki Y."/>
            <person name="Johnson-Hopson C."/>
            <person name="Hsuan V.W."/>
            <person name="Iida K."/>
            <person name="Karnes M."/>
            <person name="Khan S."/>
            <person name="Koesema E."/>
            <person name="Ishida J."/>
            <person name="Jiang P.X."/>
            <person name="Jones T."/>
            <person name="Kawai J."/>
            <person name="Kamiya A."/>
            <person name="Meyers C."/>
            <person name="Nakajima M."/>
            <person name="Narusaka M."/>
            <person name="Seki M."/>
            <person name="Sakurai T."/>
            <person name="Satou M."/>
            <person name="Tamse R."/>
            <person name="Vaysberg M."/>
            <person name="Wallender E.K."/>
            <person name="Wong C."/>
            <person name="Yamamura Y."/>
            <person name="Yuan S."/>
            <person name="Shinozaki K."/>
            <person name="Davis R.W."/>
            <person name="Theologis A."/>
            <person name="Ecker J.R."/>
        </authorList>
    </citation>
    <scope>NUCLEOTIDE SEQUENCE [LARGE SCALE MRNA]</scope>
    <source>
        <strain>cv. Columbia</strain>
    </source>
</reference>
<reference key="5">
    <citation type="journal article" date="2003" name="Plant Physiol.">
        <title>Analysis of the small GTPase gene superfamily of Arabidopsis.</title>
        <authorList>
            <person name="Vernoud V."/>
            <person name="Horton A.C."/>
            <person name="Yang Z."/>
            <person name="Nielsen E."/>
        </authorList>
    </citation>
    <scope>GENE FAMILY</scope>
    <scope>NOMENCLATURE</scope>
</reference>
<reference key="6">
    <citation type="journal article" date="2004" name="Plant Cell Physiol.">
        <title>The Arabidopsis rab5 homologs rha1 and ara7 localize to the prevacuolar compartment.</title>
        <authorList>
            <person name="Lee G.J."/>
            <person name="Sohn E.J."/>
            <person name="Lee M.H."/>
            <person name="Hwang I."/>
        </authorList>
    </citation>
    <scope>SUBCELLULAR LOCATION</scope>
</reference>
<reference key="7">
    <citation type="journal article" date="2005" name="Plant Cell">
        <title>Two plant-viral movement proteins traffic in the endocytic recycling pathway.</title>
        <authorList>
            <person name="Haupt S."/>
            <person name="Cowan G.H."/>
            <person name="Ziegler A."/>
            <person name="Roberts A.G."/>
            <person name="Oparka K.J."/>
            <person name="Torrance L."/>
        </authorList>
    </citation>
    <scope>SUBCELLULAR LOCATION</scope>
</reference>
<reference key="8">
    <citation type="journal article" date="2005" name="Proc. Natl. Acad. Sci. U.S.A.">
        <title>Endocytosis and degradation of BOR1, a boron transporter of Arabidopsis thaliana, regulated by boron availability.</title>
        <authorList>
            <person name="Takano J."/>
            <person name="Miwa K."/>
            <person name="Yuan L."/>
            <person name="von Wiren N."/>
            <person name="Fujiwara T."/>
        </authorList>
    </citation>
    <scope>FUNCTION</scope>
    <scope>SUBCELLULAR LOCATION</scope>
</reference>
<reference key="9">
    <citation type="journal article" date="2007" name="Plant Cell">
        <title>VPS9a, the common activator for two distinct types of Rab5 GTPases, is essential for the development of Arabidopsis thaliana.</title>
        <authorList>
            <person name="Goh T."/>
            <person name="Uchida W."/>
            <person name="Arakawa S."/>
            <person name="Ito E."/>
            <person name="Dainobu T."/>
            <person name="Ebine K."/>
            <person name="Takeuchi M."/>
            <person name="Sato K."/>
            <person name="Ueda T."/>
            <person name="Nakano A."/>
        </authorList>
    </citation>
    <scope>INTERACTION WITH VPS9A</scope>
    <scope>INDUCTION</scope>
</reference>
<reference key="10">
    <citation type="journal article" date="2008" name="Plant Physiol.">
        <title>Transcriptome analyses show changes in gene expression to accompany pollen germination and tube growth in Arabidopsis.</title>
        <authorList>
            <person name="Wang Y."/>
            <person name="Zhang W.Z."/>
            <person name="Song L.F."/>
            <person name="Zou J.J."/>
            <person name="Su Z."/>
            <person name="Wu W.H."/>
        </authorList>
    </citation>
    <scope>DEVELOPMENTAL STAGE</scope>
</reference>
<reference key="11">
    <citation type="journal article" date="2010" name="Proc. Natl. Acad. Sci. U.S.A.">
        <title>Translationally controlled tumor protein is a conserved mitotic growth integrator in animals and plants.</title>
        <authorList>
            <person name="Brioudes F."/>
            <person name="Thierry A.M."/>
            <person name="Chambrier P."/>
            <person name="Mollereau B."/>
            <person name="Bendahmane M."/>
        </authorList>
    </citation>
    <scope>INTERACTION WITH TCTP1</scope>
</reference>
<reference key="12">
    <citation type="journal article" date="2013" name="J. Exp. Bot.">
        <title>ARA7(Q69L) expression in transgenic Arabidopsis cells induces the formation of enlarged multivesicular bodies.</title>
        <authorList>
            <person name="Jia T."/>
            <person name="Gao C."/>
            <person name="Cui Y."/>
            <person name="Wang J."/>
            <person name="Ding Y."/>
            <person name="Cai Y."/>
            <person name="Ueda T."/>
            <person name="Nakano A."/>
            <person name="Jiang L."/>
        </authorList>
    </citation>
    <scope>FUNCTION</scope>
    <scope>SUBCELLULAR LOCATION</scope>
</reference>
<reference key="13">
    <citation type="journal article" date="2013" name="Plant Cell">
        <title>Protein S-acyl transferase10 is critical for development and salt tolerance in Arabidopsis.</title>
        <authorList>
            <person name="Zhou L.Z."/>
            <person name="Li S."/>
            <person name="Feng Q.N."/>
            <person name="Zhang Y.L."/>
            <person name="Zhao X."/>
            <person name="Zeng Y.L."/>
            <person name="Wang H."/>
            <person name="Jiang L."/>
            <person name="Zhang Y."/>
        </authorList>
    </citation>
    <scope>SUBCELLULAR LOCATION</scope>
</reference>
<reference key="14">
    <citation type="journal article" date="2014" name="Plant Cell">
        <title>Activation of the Rab7 GTPase by the MON1-CCZ1 complex is essential for PVC-to-vacuole trafficking and plant growth in Arabidopsis.</title>
        <authorList>
            <person name="Cui Y."/>
            <person name="Zhao Q."/>
            <person name="Gao C."/>
            <person name="Ding Y."/>
            <person name="Zeng Y."/>
            <person name="Ueda T."/>
            <person name="Nakano A."/>
            <person name="Jiang L."/>
        </authorList>
    </citation>
    <scope>FUNCTION</scope>
    <scope>INTERACTION WITH MON1</scope>
    <scope>SUBCELLULAR LOCATION</scope>
    <scope>MUTAGENESIS OF SER-24</scope>
</reference>
<reference key="15">
    <citation type="journal article" date="2016" name="Plant Cell">
        <title>ENDOSOMAL RAB EFFECTOR WITH PX-DOMAIN, an interacting partner of RAB5 GTPases, regulates membrane trafficking to protein storage vacuoles in Arabidopsis.</title>
        <authorList>
            <person name="Sakurai H.T."/>
            <person name="Inoue T."/>
            <person name="Nakano A."/>
            <person name="Ueda T."/>
        </authorList>
    </citation>
    <scope>FUNCTION</scope>
    <scope>INTERACTION WITH EREX</scope>
    <scope>MUTAGENESIS OF SER-24</scope>
</reference>
<reference key="16">
    <citation type="journal article" date="2018" name="Proc. Natl. Acad. Sci. U.S.A.">
        <title>Distinct sets of tethering complexes, SNARE complexes, and Rab GTPases mediate membrane fusion at the vacuole in Arabidopsis.</title>
        <authorList>
            <person name="Takemoto K."/>
            <person name="Ebine K."/>
            <person name="Askani J.C."/>
            <person name="Krueger F."/>
            <person name="Gonzalez Z.A."/>
            <person name="Ito E."/>
            <person name="Goh T."/>
            <person name="Schumacher K."/>
            <person name="Nakano A."/>
            <person name="Ueda T."/>
        </authorList>
    </citation>
    <scope>SUBCELLULAR LOCATION</scope>
    <scope>INTERACTION WITH VPS3</scope>
</reference>
<reference key="17">
    <citation type="journal article" date="2010" name="J. Biol. Chem.">
        <title>GDP-bound and nucleotide-free intermediates of the guanine nucleotide exchange in the Rab5.Vps9 system.</title>
        <authorList>
            <person name="Uejima T."/>
            <person name="Ihara K."/>
            <person name="Goh T."/>
            <person name="Ito E."/>
            <person name="Sunada M."/>
            <person name="Ueda T."/>
            <person name="Nakano A."/>
            <person name="Wakatsuki S."/>
        </authorList>
    </citation>
    <scope>X-RAY CRYSTALLOGRAPHY (2.08 ANGSTROMS) OF 1-179 IN COMPLEX WITH GDP</scope>
    <scope>INTERACTION WITH VPS9A</scope>
    <scope>SUBCELLULAR LOCATION</scope>
    <scope>MUTAGENESIS OF VAL-19; SER-24; VAL-36; THR-42; GLY-44; ALA-46; PHE-47; TRP-64; ALA-67; GLN-69; SER-74; LEU-75; MET-78; TYR-79 AND ASN-123</scope>
</reference>
<reference key="18">
    <citation type="journal article" date="2013" name="Acta Crystallogr. D">
        <title>Direct metal recognition by guanine nucleotide-exchange factor in the initial step of the exchange reaction.</title>
        <authorList>
            <person name="Uejima T."/>
            <person name="Ihara K."/>
            <person name="Sunada M."/>
            <person name="Kawasaki M."/>
            <person name="Ueda T."/>
            <person name="Kato R."/>
            <person name="Nakano A."/>
            <person name="Wakatsuki S."/>
        </authorList>
    </citation>
    <scope>X-RAY CRYSTALLOGRAPHY (2.20 ANGSTROMS) OF 1-179</scope>
</reference>
<accession>Q9SN68</accession>
<keyword id="KW-0002">3D-structure</keyword>
<keyword id="KW-1003">Cell membrane</keyword>
<keyword id="KW-0963">Cytoplasm</keyword>
<keyword id="KW-0967">Endosome</keyword>
<keyword id="KW-0342">GTP-binding</keyword>
<keyword id="KW-0449">Lipoprotein</keyword>
<keyword id="KW-0472">Membrane</keyword>
<keyword id="KW-0547">Nucleotide-binding</keyword>
<keyword id="KW-0636">Prenylation</keyword>
<keyword id="KW-0653">Protein transport</keyword>
<keyword id="KW-1185">Reference proteome</keyword>
<keyword id="KW-0813">Transport</keyword>
<proteinExistence type="evidence at protein level"/>
<protein>
    <recommendedName>
        <fullName evidence="16">Ras-related protein RABF2b</fullName>
        <shortName evidence="16">AtRABF2b</shortName>
    </recommendedName>
    <alternativeName>
        <fullName evidence="15">Ras-related protein Ara-7</fullName>
    </alternativeName>
    <alternativeName>
        <fullName evidence="18">Ras-related protein Rab5B</fullName>
        <shortName evidence="18">AtRab5B</shortName>
    </alternativeName>
</protein>
<sequence>MAAAGNKSINAKLVLLGDVGAGKSSLVLRFVKDQFVEFQESTIGAAFFSQTLAVNDATVKFEIWDTAGQERYHSLAPMYYRGAAAAIIVFDVTNQASFERAKKWVQELQAQGNPNMVMALAGNKSDLLDARKVTAEDAQTYAQENGLFFMETSAKTATNVKEIFYEIARRLPRVQPTENPTGMVLPDRAMDRAVSSSCCA</sequence>
<comment type="function">
    <text evidence="5 11 12 13">Endosomal protein that may be involved in endocytosis (PubMed:16103374). Involved in the trafficking of proteins from prevacuolar compartments (PVCs) to vacuoles (PubMed:23682115, PubMed:24824487). May activate the MON1-CCZ1 complex which acts as guanine nucleotide exchange factors (GEF) for Rab7 protein family, and serves as a link between Rab5 and Rab7 families in PVCs, and mediates PVC maturation (PubMed:24824487). Involved in vacuolar transport of storage proteins with EREX as effector. Regulates membrane trafficking to protein storage vacuoles (PSVs) (PubMed:27288222).</text>
</comment>
<comment type="activity regulation">
    <text evidence="20">Regulated by guanine nucleotide exchange factors (GEFs) which promote the exchange of bound GDP for free GTP.</text>
</comment>
<comment type="subunit">
    <text evidence="6 8 9 12 13 14">Interacts with VPS9A homodimer (PubMed:18055610, PubMed:20833725). Interacts with TCTP1 (PubMed:20736351). Interacts with MON1 (PubMed:24824487). Interacts with EREX (via PX domain) (PubMed:27288222). Binds to VPS3 (PubMed:29463724).</text>
</comment>
<comment type="subcellular location">
    <subcellularLocation>
        <location evidence="2 10">Early endosome membrane</location>
        <topology evidence="17">Lipid-anchor</topology>
    </subcellularLocation>
    <subcellularLocation>
        <location evidence="4 5 12">Endosome membrane</location>
        <topology evidence="17">Lipid-anchor</topology>
    </subcellularLocation>
    <subcellularLocation>
        <location evidence="3 12">Prevacuolar compartment membrane</location>
        <topology evidence="17">Lipid-anchor</topology>
    </subcellularLocation>
    <subcellularLocation>
        <location evidence="11">Endosome</location>
        <location evidence="11">Multivesicular body membrane</location>
        <topology evidence="17">Lipid-anchor</topology>
    </subcellularLocation>
    <subcellularLocation>
        <location evidence="19">Cell membrane</location>
        <topology evidence="17">Lipid-anchor</topology>
    </subcellularLocation>
    <subcellularLocation>
        <location evidence="14">Cytoplasm</location>
    </subcellularLocation>
    <text evidence="14">Strong co-localization with VPS3 and VPS18 in cytoplasmic puncta.</text>
</comment>
<comment type="tissue specificity">
    <text evidence="2">Expressed in roots and actively dividing cells.</text>
</comment>
<comment type="developmental stage">
    <text evidence="7">Expressed during pollen germination and pollen tube growth.</text>
</comment>
<comment type="induction">
    <text evidence="6">Activated by VPS9A.</text>
</comment>
<comment type="miscellaneous">
    <text evidence="11">Over-expression of the constitutively active GTP-bound mutant of Leu-69 induces the formation of large ring-like structures of 1-2 micrometers in diameter.</text>
</comment>
<comment type="similarity">
    <text evidence="17">Belongs to the small GTPase superfamily. Rab family.</text>
</comment>
<evidence type="ECO:0000250" key="1"/>
<evidence type="ECO:0000269" key="2">
    <source>
    </source>
</evidence>
<evidence type="ECO:0000269" key="3">
    <source>
    </source>
</evidence>
<evidence type="ECO:0000269" key="4">
    <source>
    </source>
</evidence>
<evidence type="ECO:0000269" key="5">
    <source>
    </source>
</evidence>
<evidence type="ECO:0000269" key="6">
    <source>
    </source>
</evidence>
<evidence type="ECO:0000269" key="7">
    <source>
    </source>
</evidence>
<evidence type="ECO:0000269" key="8">
    <source>
    </source>
</evidence>
<evidence type="ECO:0000269" key="9">
    <source>
    </source>
</evidence>
<evidence type="ECO:0000269" key="10">
    <source>
    </source>
</evidence>
<evidence type="ECO:0000269" key="11">
    <source>
    </source>
</evidence>
<evidence type="ECO:0000269" key="12">
    <source>
    </source>
</evidence>
<evidence type="ECO:0000269" key="13">
    <source>
    </source>
</evidence>
<evidence type="ECO:0000269" key="14">
    <source>
    </source>
</evidence>
<evidence type="ECO:0000303" key="15">
    <source>
    </source>
</evidence>
<evidence type="ECO:0000303" key="16">
    <source>
    </source>
</evidence>
<evidence type="ECO:0000305" key="17"/>
<evidence type="ECO:0000305" key="18">
    <source>
    </source>
</evidence>
<evidence type="ECO:0000305" key="19">
    <source>
    </source>
</evidence>
<evidence type="ECO:0000305" key="20">
    <source>
    </source>
</evidence>
<evidence type="ECO:0000312" key="21">
    <source>
        <dbReference type="Araport" id="AT4G19640"/>
    </source>
</evidence>
<evidence type="ECO:0000312" key="22">
    <source>
        <dbReference type="EMBL" id="CAA16940.1"/>
    </source>
</evidence>
<evidence type="ECO:0007744" key="23">
    <source>
        <dbReference type="PDB" id="2EFC"/>
    </source>
</evidence>
<evidence type="ECO:0007744" key="24">
    <source>
        <dbReference type="PDB" id="2EFH"/>
    </source>
</evidence>
<evidence type="ECO:0007829" key="25">
    <source>
        <dbReference type="PDB" id="2EFE"/>
    </source>
</evidence>
<evidence type="ECO:0007829" key="26">
    <source>
        <dbReference type="PDB" id="4G01"/>
    </source>
</evidence>
<feature type="chain" id="PRO_0000406605" description="Ras-related protein RABF2b">
    <location>
        <begin position="1"/>
        <end position="200"/>
    </location>
</feature>
<feature type="short sequence motif" description="Effector region" evidence="1">
    <location>
        <begin position="39"/>
        <end position="47"/>
    </location>
</feature>
<feature type="binding site" evidence="9 23 24">
    <location>
        <begin position="17"/>
        <end position="25"/>
    </location>
    <ligand>
        <name>GTP</name>
        <dbReference type="ChEBI" id="CHEBI:37565"/>
    </ligand>
</feature>
<feature type="binding site" evidence="9 23 24">
    <location>
        <begin position="65"/>
        <end position="69"/>
    </location>
    <ligand>
        <name>GTP</name>
        <dbReference type="ChEBI" id="CHEBI:37565"/>
    </ligand>
</feature>
<feature type="binding site" evidence="9 23 24">
    <location>
        <begin position="123"/>
        <end position="126"/>
    </location>
    <ligand>
        <name>GTP</name>
        <dbReference type="ChEBI" id="CHEBI:37565"/>
    </ligand>
</feature>
<feature type="binding site" evidence="9 23 24">
    <location>
        <begin position="153"/>
        <end position="154"/>
    </location>
    <ligand>
        <name>GTP</name>
        <dbReference type="ChEBI" id="CHEBI:37565"/>
    </ligand>
</feature>
<feature type="lipid moiety-binding region" description="S-geranylgeranyl cysteine" evidence="1">
    <location>
        <position position="198"/>
    </location>
</feature>
<feature type="lipid moiety-binding region" description="S-geranylgeranyl cysteine" evidence="1">
    <location>
        <position position="199"/>
    </location>
</feature>
<feature type="mutagenesis site" description="Loss of interaction with VPS9A. Loss of interaction with MON1. Loss of interaction with EREX." evidence="9 12 13">
    <original>V</original>
    <variation>T</variation>
    <location>
        <position position="19"/>
    </location>
</feature>
<feature type="mutagenesis site" description="Dominant negative (GDP-bound form); no effect on the interaction with VPS9A." evidence="9">
    <original>S</original>
    <variation>N</variation>
    <location>
        <position position="24"/>
    </location>
</feature>
<feature type="mutagenesis site" description="No effect on the interaction with VPS9A." evidence="9">
    <original>V</original>
    <variation>P</variation>
    <location>
        <position position="36"/>
    </location>
</feature>
<feature type="mutagenesis site" description="No effect on the interaction with VPS9A." evidence="9">
    <original>T</original>
    <variation>A</variation>
    <location>
        <position position="42"/>
    </location>
</feature>
<feature type="mutagenesis site" description="No effect on the interaction with VPS9A." evidence="9">
    <original>G</original>
    <variation>P</variation>
    <location>
        <position position="44"/>
    </location>
</feature>
<feature type="mutagenesis site" description="Loss of interaction with VPS9A." evidence="9">
    <original>A</original>
    <variation>D</variation>
    <location>
        <position position="46"/>
    </location>
</feature>
<feature type="mutagenesis site" description="Loss of interaction with VPS9A." evidence="9">
    <original>F</original>
    <variation>A</variation>
    <location>
        <position position="47"/>
    </location>
</feature>
<feature type="mutagenesis site" description="Loss of interaction with VPS9A." evidence="9">
    <original>W</original>
    <variation>A</variation>
    <location>
        <position position="64"/>
    </location>
</feature>
<feature type="mutagenesis site" description="Loss of interaction with VPS9A." evidence="9">
    <original>A</original>
    <variation>G</variation>
    <location>
        <position position="67"/>
    </location>
</feature>
<feature type="mutagenesis site" description="Loss of interaction with VPS9A." evidence="2 9">
    <original>Q</original>
    <variation>E</variation>
    <location>
        <position position="69"/>
    </location>
</feature>
<feature type="mutagenesis site" description="Constitutively active (GTP-bound form); loss of targeting to plasma membrane and interaction with VPS9A." evidence="2 9">
    <original>Q</original>
    <variation>L</variation>
    <location>
        <position position="69"/>
    </location>
</feature>
<feature type="mutagenesis site" description="Loss of interaction with VPS9A." evidence="9">
    <original>S</original>
    <variation>A</variation>
    <location>
        <position position="74"/>
    </location>
</feature>
<feature type="mutagenesis site" description="Loss of interaction with VPS9A." evidence="9">
    <original>L</original>
    <variation>A</variation>
    <location>
        <position position="75"/>
    </location>
</feature>
<feature type="mutagenesis site" description="Loss of interaction with VPS9A." evidence="9">
    <original>M</original>
    <variation>A</variation>
    <location>
        <position position="78"/>
    </location>
</feature>
<feature type="mutagenesis site" description="Loss of interaction with VPS9A." evidence="9">
    <original>Y</original>
    <variation>A</variation>
    <location>
        <position position="79"/>
    </location>
</feature>
<feature type="mutagenesis site" description="Blocks nucleotide binding; no effect on the interaction with VPS9A." evidence="9">
    <original>N</original>
    <variation>I</variation>
    <location>
        <position position="123"/>
    </location>
</feature>
<feature type="strand" evidence="25">
    <location>
        <begin position="9"/>
        <end position="16"/>
    </location>
</feature>
<feature type="helix" evidence="25">
    <location>
        <begin position="23"/>
        <end position="32"/>
    </location>
</feature>
<feature type="turn" evidence="25">
    <location>
        <begin position="36"/>
        <end position="38"/>
    </location>
</feature>
<feature type="strand" evidence="26">
    <location>
        <begin position="41"/>
        <end position="43"/>
    </location>
</feature>
<feature type="strand" evidence="25">
    <location>
        <begin position="46"/>
        <end position="54"/>
    </location>
</feature>
<feature type="strand" evidence="25">
    <location>
        <begin position="57"/>
        <end position="65"/>
    </location>
</feature>
<feature type="helix" evidence="25">
    <location>
        <begin position="70"/>
        <end position="76"/>
    </location>
</feature>
<feature type="helix" evidence="25">
    <location>
        <begin position="77"/>
        <end position="80"/>
    </location>
</feature>
<feature type="strand" evidence="25">
    <location>
        <begin position="84"/>
        <end position="91"/>
    </location>
</feature>
<feature type="helix" evidence="25">
    <location>
        <begin position="95"/>
        <end position="111"/>
    </location>
</feature>
<feature type="strand" evidence="25">
    <location>
        <begin position="117"/>
        <end position="123"/>
    </location>
</feature>
<feature type="turn" evidence="25">
    <location>
        <begin position="128"/>
        <end position="130"/>
    </location>
</feature>
<feature type="helix" evidence="25">
    <location>
        <begin position="135"/>
        <end position="144"/>
    </location>
</feature>
<feature type="strand" evidence="25">
    <location>
        <begin position="148"/>
        <end position="151"/>
    </location>
</feature>
<feature type="strand" evidence="25">
    <location>
        <begin position="154"/>
        <end position="156"/>
    </location>
</feature>
<feature type="helix" evidence="25">
    <location>
        <begin position="160"/>
        <end position="169"/>
    </location>
</feature>
<name>RAF2B_ARATH</name>